<evidence type="ECO:0000255" key="1"/>
<evidence type="ECO:0000305" key="2"/>
<evidence type="ECO:0000312" key="3">
    <source>
        <dbReference type="WormBase" id="F53C11.3"/>
    </source>
</evidence>
<accession>Q93761</accession>
<dbReference type="EC" id="1.-.-.-"/>
<dbReference type="EMBL" id="Z79756">
    <property type="protein sequence ID" value="CAB02118.1"/>
    <property type="molecule type" value="Genomic_DNA"/>
</dbReference>
<dbReference type="PIR" id="T22556">
    <property type="entry name" value="T22556"/>
</dbReference>
<dbReference type="SMR" id="Q93761"/>
<dbReference type="BioGRID" id="44886">
    <property type="interactions" value="5"/>
</dbReference>
<dbReference type="FunCoup" id="Q93761">
    <property type="interactions" value="1489"/>
</dbReference>
<dbReference type="STRING" id="6239.F53C11.3.1"/>
<dbReference type="PaxDb" id="6239-F53C11.3"/>
<dbReference type="PeptideAtlas" id="Q93761"/>
<dbReference type="EnsemblMetazoa" id="F53C11.3.1">
    <property type="protein sequence ID" value="F53C11.3.1"/>
    <property type="gene ID" value="WBGene00009973"/>
</dbReference>
<dbReference type="KEGG" id="cel:CELE_F53C11.3"/>
<dbReference type="UCSC" id="F53C11.3">
    <property type="organism name" value="c. elegans"/>
</dbReference>
<dbReference type="AGR" id="WB:WBGene00009973"/>
<dbReference type="CTD" id="179872"/>
<dbReference type="WormBase" id="F53C11.3">
    <property type="protein sequence ID" value="CE10908"/>
    <property type="gene ID" value="WBGene00009973"/>
    <property type="gene designation" value="decr-1.1"/>
</dbReference>
<dbReference type="eggNOG" id="KOG0725">
    <property type="taxonomic scope" value="Eukaryota"/>
</dbReference>
<dbReference type="GeneTree" id="ENSGT00940000153801"/>
<dbReference type="HOGENOM" id="CLU_010194_1_2_1"/>
<dbReference type="InParanoid" id="Q93761"/>
<dbReference type="OMA" id="QLRDWSD"/>
<dbReference type="OrthoDB" id="1888931at2759"/>
<dbReference type="PhylomeDB" id="Q93761"/>
<dbReference type="PRO" id="PR:Q93761"/>
<dbReference type="Proteomes" id="UP000001940">
    <property type="component" value="Chromosome V"/>
</dbReference>
<dbReference type="Bgee" id="WBGene00009973">
    <property type="expression patterns" value="Expressed in larva and 4 other cell types or tissues"/>
</dbReference>
<dbReference type="GO" id="GO:0005739">
    <property type="term" value="C:mitochondrion"/>
    <property type="evidence" value="ECO:0000318"/>
    <property type="project" value="GO_Central"/>
</dbReference>
<dbReference type="GO" id="GO:0008670">
    <property type="term" value="F:2,4-dienoyl-CoA reductase (NADPH) activity"/>
    <property type="evidence" value="ECO:0000318"/>
    <property type="project" value="GO_Central"/>
</dbReference>
<dbReference type="GO" id="GO:0050829">
    <property type="term" value="P:defense response to Gram-negative bacterium"/>
    <property type="evidence" value="ECO:0000315"/>
    <property type="project" value="WormBase"/>
</dbReference>
<dbReference type="GO" id="GO:0006635">
    <property type="term" value="P:fatty acid beta-oxidation"/>
    <property type="evidence" value="ECO:0000318"/>
    <property type="project" value="GO_Central"/>
</dbReference>
<dbReference type="GO" id="GO:0045087">
    <property type="term" value="P:innate immune response"/>
    <property type="evidence" value="ECO:0000315"/>
    <property type="project" value="WormBase"/>
</dbReference>
<dbReference type="CDD" id="cd05369">
    <property type="entry name" value="TER_DECR_SDR_a"/>
    <property type="match status" value="1"/>
</dbReference>
<dbReference type="FunFam" id="3.40.50.720:FF:000288">
    <property type="entry name" value="2,4-dienoyl-CoA reductase, mitochondrial"/>
    <property type="match status" value="1"/>
</dbReference>
<dbReference type="Gene3D" id="3.40.50.720">
    <property type="entry name" value="NAD(P)-binding Rossmann-like Domain"/>
    <property type="match status" value="1"/>
</dbReference>
<dbReference type="InterPro" id="IPR036291">
    <property type="entry name" value="NAD(P)-bd_dom_sf"/>
</dbReference>
<dbReference type="InterPro" id="IPR002347">
    <property type="entry name" value="SDR_fam"/>
</dbReference>
<dbReference type="PANTHER" id="PTHR43658:SF2">
    <property type="entry name" value="PROTEIN CBG11484"/>
    <property type="match status" value="1"/>
</dbReference>
<dbReference type="PANTHER" id="PTHR43658">
    <property type="entry name" value="SHORT-CHAIN DEHYDROGENASE/REDUCTASE"/>
    <property type="match status" value="1"/>
</dbReference>
<dbReference type="Pfam" id="PF13561">
    <property type="entry name" value="adh_short_C2"/>
    <property type="match status" value="1"/>
</dbReference>
<dbReference type="PRINTS" id="PR00081">
    <property type="entry name" value="GDHRDH"/>
</dbReference>
<dbReference type="SUPFAM" id="SSF51735">
    <property type="entry name" value="NAD(P)-binding Rossmann-fold domains"/>
    <property type="match status" value="1"/>
</dbReference>
<name>YXEK_CAEEL</name>
<gene>
    <name evidence="3" type="primary">decr-1.1</name>
    <name evidence="3" type="ORF">F53C11.3</name>
</gene>
<proteinExistence type="inferred from homology"/>
<keyword id="KW-0521">NADP</keyword>
<keyword id="KW-0560">Oxidoreductase</keyword>
<keyword id="KW-1185">Reference proteome</keyword>
<feature type="chain" id="PRO_0000054877" description="Uncharacterized oxidoreductase F53C11.3">
    <location>
        <begin position="1"/>
        <end position="313"/>
    </location>
</feature>
<feature type="binding site" evidence="1">
    <location>
        <begin position="29"/>
        <end position="61"/>
    </location>
    <ligand>
        <name>NADP(+)</name>
        <dbReference type="ChEBI" id="CHEBI:58349"/>
    </ligand>
</feature>
<protein>
    <recommendedName>
        <fullName>Uncharacterized oxidoreductase F53C11.3</fullName>
        <ecNumber>1.-.-.-</ecNumber>
    </recommendedName>
</protein>
<sequence>MAHCLHPEKFFPVVKSVALPPGSLNGKVALVTGGGTGLGKAIATTFAHLGASVAIAARRLDVLEKTADEIRSSTGGVCEPFQMDVKDPAKVAKAFDAVEKKLGHTPDILINNAAGNFIMATERLSPNAYGTIIDIVLKGTLHVTTELGRRCIQQKRGASVLSITTLYAQSGAPFVVPSAVSKAGVENMTKSLASEWAKHGLRFNAIAPGPIPTEGAFGRLFAGELKDSGDAMKASVPVGRLGHPEEIANLAAFMSSDFMSWMNGAIIDFDGGQQHIHHGSHMGQFLHEWDNEKWEETENLIRGRTGKEKKSKL</sequence>
<reference key="1">
    <citation type="journal article" date="1998" name="Science">
        <title>Genome sequence of the nematode C. elegans: a platform for investigating biology.</title>
        <authorList>
            <consortium name="The C. elegans sequencing consortium"/>
        </authorList>
    </citation>
    <scope>NUCLEOTIDE SEQUENCE [LARGE SCALE GENOMIC DNA]</scope>
    <source>
        <strain>Bristol N2</strain>
    </source>
</reference>
<comment type="similarity">
    <text evidence="2">Belongs to the short-chain dehydrogenases/reductases (SDR) family. 2,4-dienoyl-CoA reductase subfamily.</text>
</comment>
<organism>
    <name type="scientific">Caenorhabditis elegans</name>
    <dbReference type="NCBI Taxonomy" id="6239"/>
    <lineage>
        <taxon>Eukaryota</taxon>
        <taxon>Metazoa</taxon>
        <taxon>Ecdysozoa</taxon>
        <taxon>Nematoda</taxon>
        <taxon>Chromadorea</taxon>
        <taxon>Rhabditida</taxon>
        <taxon>Rhabditina</taxon>
        <taxon>Rhabditomorpha</taxon>
        <taxon>Rhabditoidea</taxon>
        <taxon>Rhabditidae</taxon>
        <taxon>Peloderinae</taxon>
        <taxon>Caenorhabditis</taxon>
    </lineage>
</organism>